<comment type="function">
    <text>Involved in the transposition of the insertion sequence IS5.</text>
</comment>
<comment type="similarity">
    <text evidence="1">Belongs to the transposase 11 family.</text>
</comment>
<comment type="caution">
    <text evidence="1">There is no equivalent of this gene in strain K12 / MG1655.</text>
</comment>
<keyword id="KW-0233">DNA recombination</keyword>
<keyword id="KW-0238">DNA-binding</keyword>
<keyword id="KW-0814">Transposable element</keyword>
<keyword id="KW-0815">Transposition</keyword>
<evidence type="ECO:0000305" key="1"/>
<name>INH14_ECOLI</name>
<reference key="1">
    <citation type="journal article" date="1996" name="DNA Res.">
        <title>A 570-kb DNA sequence of the Escherichia coli K-12 genome corresponding to the 28.0-40.1 min region on the linkage map.</title>
        <authorList>
            <person name="Aiba H."/>
            <person name="Baba T."/>
            <person name="Fujita K."/>
            <person name="Hayashi K."/>
            <person name="Inada T."/>
            <person name="Isono K."/>
            <person name="Itoh T."/>
            <person name="Kasai H."/>
            <person name="Kashimoto K."/>
            <person name="Kimura S."/>
            <person name="Kitakawa M."/>
            <person name="Kitagawa M."/>
            <person name="Makino K."/>
            <person name="Miki T."/>
            <person name="Mizobuchi K."/>
            <person name="Mori H."/>
            <person name="Mori T."/>
            <person name="Motomura K."/>
            <person name="Nakade S."/>
            <person name="Nakamura Y."/>
            <person name="Nashimoto H."/>
            <person name="Nishio Y."/>
            <person name="Oshima T."/>
            <person name="Saito N."/>
            <person name="Sampei G."/>
            <person name="Seki Y."/>
            <person name="Sivasundaram S."/>
            <person name="Tagami H."/>
            <person name="Takeda J."/>
            <person name="Takemoto K."/>
            <person name="Takeuchi Y."/>
            <person name="Wada C."/>
            <person name="Yamamoto Y."/>
            <person name="Horiuchi T."/>
        </authorList>
    </citation>
    <scope>NUCLEOTIDE SEQUENCE [LARGE SCALE GENOMIC DNA]</scope>
    <source>
        <strain>K12 / W3110 / ATCC 27325 / DSM 5911</strain>
    </source>
</reference>
<reference key="2">
    <citation type="journal article" date="1996" name="DNA Res.">
        <title>A 460-kb DNA sequence of the Escherichia coli K-12 genome corresponding to the 40.1-50.0 min region on the linkage map.</title>
        <authorList>
            <person name="Itoh T."/>
            <person name="Aiba H."/>
            <person name="Baba T."/>
            <person name="Fujita K."/>
            <person name="Hayashi K."/>
            <person name="Inada T."/>
            <person name="Isono K."/>
            <person name="Kasai H."/>
            <person name="Kimura S."/>
            <person name="Kitakawa M."/>
            <person name="Kitagawa M."/>
            <person name="Makino K."/>
            <person name="Miki T."/>
            <person name="Mizobuchi K."/>
            <person name="Mori H."/>
            <person name="Mori T."/>
            <person name="Motomura K."/>
            <person name="Nakade S."/>
            <person name="Nakamura Y."/>
            <person name="Nashimoto H."/>
            <person name="Nishio Y."/>
            <person name="Oshima T."/>
            <person name="Saito N."/>
            <person name="Sampei G."/>
            <person name="Seki Y."/>
            <person name="Sivasundaram S."/>
            <person name="Tagami H."/>
            <person name="Takeda J."/>
            <person name="Takemoto K."/>
            <person name="Wada C."/>
            <person name="Yamamoto Y."/>
            <person name="Horiuchi T."/>
        </authorList>
    </citation>
    <scope>NUCLEOTIDE SEQUENCE [LARGE SCALE GENOMIC DNA]</scope>
    <source>
        <strain>K12 / W3110 / ATCC 27325 / DSM 5911</strain>
    </source>
</reference>
<reference key="3">
    <citation type="journal article" date="2006" name="Mol. Syst. Biol.">
        <title>Highly accurate genome sequences of Escherichia coli K-12 strains MG1655 and W3110.</title>
        <authorList>
            <person name="Hayashi K."/>
            <person name="Morooka N."/>
            <person name="Yamamoto Y."/>
            <person name="Fujita K."/>
            <person name="Isono K."/>
            <person name="Choi S."/>
            <person name="Ohtsubo E."/>
            <person name="Baba T."/>
            <person name="Wanner B.L."/>
            <person name="Mori H."/>
            <person name="Horiuchi T."/>
        </authorList>
    </citation>
    <scope>NUCLEOTIDE SEQUENCE [LARGE SCALE GENOMIC DNA]</scope>
    <source>
        <strain>K12 / W3110 / ATCC 27325 / DSM 5911</strain>
    </source>
</reference>
<gene>
    <name type="ordered locus">JW5914</name>
</gene>
<proteinExistence type="inferred from homology"/>
<dbReference type="EMBL" id="AP009048">
    <property type="protein sequence ID" value="BAA15962.2"/>
    <property type="molecule type" value="Genomic_DNA"/>
</dbReference>
<dbReference type="RefSeq" id="WP_000019403.1">
    <property type="nucleotide sequence ID" value="NZ_SSZK01000120.1"/>
</dbReference>
<dbReference type="KEGG" id="ecj:JW5914"/>
<dbReference type="KEGG" id="ecoc:C3026_01250"/>
<dbReference type="KEGG" id="ecoc:C3026_02730"/>
<dbReference type="KEGG" id="ecoc:C3026_03280"/>
<dbReference type="KEGG" id="ecoc:C3026_07795"/>
<dbReference type="KEGG" id="ecoc:C3026_10760"/>
<dbReference type="KEGG" id="ecoc:C3026_11440"/>
<dbReference type="KEGG" id="ecoc:C3026_12250"/>
<dbReference type="KEGG" id="ecoc:C3026_16315"/>
<dbReference type="KEGG" id="ecoc:C3026_17505"/>
<dbReference type="KEGG" id="ecoc:C3026_18985"/>
<dbReference type="KEGG" id="ecoc:C3026_23975"/>
<dbReference type="HOGENOM" id="CLU_049873_1_2_6"/>
<dbReference type="PhylomeDB" id="P0CE61"/>
<dbReference type="PRO" id="PR:P0CE61"/>
<dbReference type="GO" id="GO:0003677">
    <property type="term" value="F:DNA binding"/>
    <property type="evidence" value="ECO:0007669"/>
    <property type="project" value="UniProtKB-KW"/>
</dbReference>
<dbReference type="GO" id="GO:0004803">
    <property type="term" value="F:transposase activity"/>
    <property type="evidence" value="ECO:0007669"/>
    <property type="project" value="InterPro"/>
</dbReference>
<dbReference type="GO" id="GO:0006313">
    <property type="term" value="P:DNA transposition"/>
    <property type="evidence" value="ECO:0007669"/>
    <property type="project" value="InterPro"/>
</dbReference>
<dbReference type="InterPro" id="IPR047959">
    <property type="entry name" value="Transpos_IS5"/>
</dbReference>
<dbReference type="InterPro" id="IPR002559">
    <property type="entry name" value="Transposase_11"/>
</dbReference>
<dbReference type="InterPro" id="IPR008490">
    <property type="entry name" value="Transposase_InsH_N"/>
</dbReference>
<dbReference type="NCBIfam" id="NF033581">
    <property type="entry name" value="transpos_IS5_4"/>
    <property type="match status" value="1"/>
</dbReference>
<dbReference type="PANTHER" id="PTHR35604">
    <property type="entry name" value="TRANSPOSASE INSH FOR INSERTION SEQUENCE ELEMENT IS5A-RELATED"/>
    <property type="match status" value="1"/>
</dbReference>
<dbReference type="PANTHER" id="PTHR35604:SF2">
    <property type="entry name" value="TRANSPOSASE INSH FOR INSERTION SEQUENCE ELEMENT IS5A-RELATED"/>
    <property type="match status" value="1"/>
</dbReference>
<dbReference type="Pfam" id="PF01609">
    <property type="entry name" value="DDE_Tnp_1"/>
    <property type="match status" value="1"/>
</dbReference>
<dbReference type="Pfam" id="PF05598">
    <property type="entry name" value="DUF772"/>
    <property type="match status" value="1"/>
</dbReference>
<sequence length="326" mass="37851">MSHQLTFADSEFSSKRRQTRKEIFLSRMEQILPWQNMVEVIEPFYPKAGNGRRPYPLETMLRIHCMQHWYNLSDGAMEDALYEIASMRLFARLSLDSALPDRTTIMNFRHLLEQHQLARQLFKTINRWLAEAGVMMTQGTLVDATIIEAPSSTKNKEQQRDPEMHQTKKGNQWHFGMKAHIGVDAKSGLTHSLVTTAANEHDLNQLGNLLHGEEQFVSADAGYQGAPQREELAEVDVDWLIAERPGKVRTLKQHPRKNKTAINIEYMKASIRARVEHPFRIIKRQFGFVKARYKGLLKNDNQLAMLFTLANLFRADQMIRQWERSH</sequence>
<protein>
    <recommendedName>
        <fullName>Transposase InsH for insertion sequence element IS5-14</fullName>
    </recommendedName>
</protein>
<feature type="chain" id="PRO_0000392492" description="Transposase InsH for insertion sequence element IS5-14">
    <location>
        <begin position="1"/>
        <end position="326"/>
    </location>
</feature>
<accession>P0CE61</accession>
<accession>O07987</accession>
<accession>O07988</accession>
<accession>P03837</accession>
<accession>P76355</accession>
<accession>Q2MBK1</accession>
<accession>Q2MBM8</accession>
<organism>
    <name type="scientific">Escherichia coli (strain K12)</name>
    <dbReference type="NCBI Taxonomy" id="83333"/>
    <lineage>
        <taxon>Bacteria</taxon>
        <taxon>Pseudomonadati</taxon>
        <taxon>Pseudomonadota</taxon>
        <taxon>Gammaproteobacteria</taxon>
        <taxon>Enterobacterales</taxon>
        <taxon>Enterobacteriaceae</taxon>
        <taxon>Escherichia</taxon>
    </lineage>
</organism>